<dbReference type="EC" id="2.7.8.13" evidence="1"/>
<dbReference type="EMBL" id="BA000031">
    <property type="protein sequence ID" value="BAC58720.1"/>
    <property type="molecule type" value="Genomic_DNA"/>
</dbReference>
<dbReference type="RefSeq" id="NP_796836.1">
    <property type="nucleotide sequence ID" value="NC_004603.1"/>
</dbReference>
<dbReference type="RefSeq" id="WP_005458164.1">
    <property type="nucleotide sequence ID" value="NC_004603.1"/>
</dbReference>
<dbReference type="SMR" id="Q87SG7"/>
<dbReference type="GeneID" id="1187925"/>
<dbReference type="KEGG" id="vpa:VP0457"/>
<dbReference type="PATRIC" id="fig|223926.6.peg.435"/>
<dbReference type="eggNOG" id="COG0472">
    <property type="taxonomic scope" value="Bacteria"/>
</dbReference>
<dbReference type="HOGENOM" id="CLU_023982_0_0_6"/>
<dbReference type="UniPathway" id="UPA00219"/>
<dbReference type="Proteomes" id="UP000002493">
    <property type="component" value="Chromosome 1"/>
</dbReference>
<dbReference type="GO" id="GO:0005886">
    <property type="term" value="C:plasma membrane"/>
    <property type="evidence" value="ECO:0007669"/>
    <property type="project" value="UniProtKB-SubCell"/>
</dbReference>
<dbReference type="GO" id="GO:0046872">
    <property type="term" value="F:metal ion binding"/>
    <property type="evidence" value="ECO:0007669"/>
    <property type="project" value="UniProtKB-KW"/>
</dbReference>
<dbReference type="GO" id="GO:0008963">
    <property type="term" value="F:phospho-N-acetylmuramoyl-pentapeptide-transferase activity"/>
    <property type="evidence" value="ECO:0007669"/>
    <property type="project" value="UniProtKB-UniRule"/>
</dbReference>
<dbReference type="GO" id="GO:0051992">
    <property type="term" value="F:UDP-N-acetylmuramoyl-L-alanyl-D-glutamyl-meso-2,6-diaminopimelyl-D-alanyl-D-alanine:undecaprenyl-phosphate transferase activity"/>
    <property type="evidence" value="ECO:0007669"/>
    <property type="project" value="RHEA"/>
</dbReference>
<dbReference type="GO" id="GO:0051301">
    <property type="term" value="P:cell division"/>
    <property type="evidence" value="ECO:0007669"/>
    <property type="project" value="UniProtKB-KW"/>
</dbReference>
<dbReference type="GO" id="GO:0071555">
    <property type="term" value="P:cell wall organization"/>
    <property type="evidence" value="ECO:0007669"/>
    <property type="project" value="UniProtKB-KW"/>
</dbReference>
<dbReference type="GO" id="GO:0009252">
    <property type="term" value="P:peptidoglycan biosynthetic process"/>
    <property type="evidence" value="ECO:0007669"/>
    <property type="project" value="UniProtKB-UniRule"/>
</dbReference>
<dbReference type="GO" id="GO:0008360">
    <property type="term" value="P:regulation of cell shape"/>
    <property type="evidence" value="ECO:0007669"/>
    <property type="project" value="UniProtKB-KW"/>
</dbReference>
<dbReference type="CDD" id="cd06852">
    <property type="entry name" value="GT_MraY"/>
    <property type="match status" value="1"/>
</dbReference>
<dbReference type="HAMAP" id="MF_00038">
    <property type="entry name" value="MraY"/>
    <property type="match status" value="1"/>
</dbReference>
<dbReference type="InterPro" id="IPR000715">
    <property type="entry name" value="Glycosyl_transferase_4"/>
</dbReference>
<dbReference type="InterPro" id="IPR003524">
    <property type="entry name" value="PNAcMuramoyl-5peptid_Trfase"/>
</dbReference>
<dbReference type="InterPro" id="IPR018480">
    <property type="entry name" value="PNAcMuramoyl-5peptid_Trfase_CS"/>
</dbReference>
<dbReference type="NCBIfam" id="TIGR00445">
    <property type="entry name" value="mraY"/>
    <property type="match status" value="1"/>
</dbReference>
<dbReference type="PANTHER" id="PTHR22926">
    <property type="entry name" value="PHOSPHO-N-ACETYLMURAMOYL-PENTAPEPTIDE-TRANSFERASE"/>
    <property type="match status" value="1"/>
</dbReference>
<dbReference type="PANTHER" id="PTHR22926:SF5">
    <property type="entry name" value="PHOSPHO-N-ACETYLMURAMOYL-PENTAPEPTIDE-TRANSFERASE HOMOLOG"/>
    <property type="match status" value="1"/>
</dbReference>
<dbReference type="Pfam" id="PF00953">
    <property type="entry name" value="Glycos_transf_4"/>
    <property type="match status" value="1"/>
</dbReference>
<dbReference type="Pfam" id="PF10555">
    <property type="entry name" value="MraY_sig1"/>
    <property type="match status" value="1"/>
</dbReference>
<dbReference type="PROSITE" id="PS01347">
    <property type="entry name" value="MRAY_1"/>
    <property type="match status" value="1"/>
</dbReference>
<dbReference type="PROSITE" id="PS01348">
    <property type="entry name" value="MRAY_2"/>
    <property type="match status" value="1"/>
</dbReference>
<sequence>MIIWLAELLQPYLSFFRLFEYLSFRAILSVLTALGLSLWMGPIMIKRLQMLQIGQVVRNEGPESHFSKRGTPTMGGIMILAAISITILLWTDLSNPYVWAVLTVLLGYGAVGFVDDYRKVVRKNTDGLIARWKYFWQSLIAFVVAFALYAYGKDTAATQLVVPFFKDVMPQLGLMYIILTYFVIVGTSNAVNLTDGLDGLAIMPTVLVAAGFAVIAWATGNVNFSEYLHIPYLPHASELVVVCTAIVGAGLGFLWFNTYPAQVFMGDVGSLALGGALGTIAVLVRQELVLVIMGGVFVMETLSVILQVGSYKLRGQRIFRMAPIHHHYELKGWPEPRVIVRFWIISMVLVLIGLATLKVR</sequence>
<gene>
    <name evidence="1" type="primary">mraY</name>
    <name type="ordered locus">VP0457</name>
</gene>
<proteinExistence type="inferred from homology"/>
<name>MRAY_VIBPA</name>
<keyword id="KW-0131">Cell cycle</keyword>
<keyword id="KW-0132">Cell division</keyword>
<keyword id="KW-0997">Cell inner membrane</keyword>
<keyword id="KW-1003">Cell membrane</keyword>
<keyword id="KW-0133">Cell shape</keyword>
<keyword id="KW-0961">Cell wall biogenesis/degradation</keyword>
<keyword id="KW-0460">Magnesium</keyword>
<keyword id="KW-0472">Membrane</keyword>
<keyword id="KW-0479">Metal-binding</keyword>
<keyword id="KW-0573">Peptidoglycan synthesis</keyword>
<keyword id="KW-0808">Transferase</keyword>
<keyword id="KW-0812">Transmembrane</keyword>
<keyword id="KW-1133">Transmembrane helix</keyword>
<feature type="chain" id="PRO_0000108924" description="Phospho-N-acetylmuramoyl-pentapeptide-transferase">
    <location>
        <begin position="1"/>
        <end position="360"/>
    </location>
</feature>
<feature type="transmembrane region" description="Helical" evidence="1">
    <location>
        <begin position="26"/>
        <end position="46"/>
    </location>
</feature>
<feature type="transmembrane region" description="Helical" evidence="1">
    <location>
        <begin position="70"/>
        <end position="90"/>
    </location>
</feature>
<feature type="transmembrane region" description="Helical" evidence="1">
    <location>
        <begin position="94"/>
        <end position="114"/>
    </location>
</feature>
<feature type="transmembrane region" description="Helical" evidence="1">
    <location>
        <begin position="132"/>
        <end position="152"/>
    </location>
</feature>
<feature type="transmembrane region" description="Helical" evidence="1">
    <location>
        <begin position="168"/>
        <end position="188"/>
    </location>
</feature>
<feature type="transmembrane region" description="Helical" evidence="1">
    <location>
        <begin position="199"/>
        <end position="219"/>
    </location>
</feature>
<feature type="transmembrane region" description="Helical" evidence="1">
    <location>
        <begin position="236"/>
        <end position="256"/>
    </location>
</feature>
<feature type="transmembrane region" description="Helical" evidence="1">
    <location>
        <begin position="263"/>
        <end position="283"/>
    </location>
</feature>
<feature type="transmembrane region" description="Helical" evidence="1">
    <location>
        <begin position="288"/>
        <end position="308"/>
    </location>
</feature>
<feature type="transmembrane region" description="Helical" evidence="1">
    <location>
        <begin position="338"/>
        <end position="358"/>
    </location>
</feature>
<evidence type="ECO:0000255" key="1">
    <source>
        <dbReference type="HAMAP-Rule" id="MF_00038"/>
    </source>
</evidence>
<organism>
    <name type="scientific">Vibrio parahaemolyticus serotype O3:K6 (strain RIMD 2210633)</name>
    <dbReference type="NCBI Taxonomy" id="223926"/>
    <lineage>
        <taxon>Bacteria</taxon>
        <taxon>Pseudomonadati</taxon>
        <taxon>Pseudomonadota</taxon>
        <taxon>Gammaproteobacteria</taxon>
        <taxon>Vibrionales</taxon>
        <taxon>Vibrionaceae</taxon>
        <taxon>Vibrio</taxon>
    </lineage>
</organism>
<comment type="function">
    <text evidence="1">Catalyzes the initial step of the lipid cycle reactions in the biosynthesis of the cell wall peptidoglycan: transfers peptidoglycan precursor phospho-MurNAc-pentapeptide from UDP-MurNAc-pentapeptide onto the lipid carrier undecaprenyl phosphate, yielding undecaprenyl-pyrophosphoryl-MurNAc-pentapeptide, known as lipid I.</text>
</comment>
<comment type="catalytic activity">
    <reaction evidence="1">
        <text>UDP-N-acetyl-alpha-D-muramoyl-L-alanyl-gamma-D-glutamyl-meso-2,6-diaminopimeloyl-D-alanyl-D-alanine + di-trans,octa-cis-undecaprenyl phosphate = di-trans,octa-cis-undecaprenyl diphospho-N-acetyl-alpha-D-muramoyl-L-alanyl-D-glutamyl-meso-2,6-diaminopimeloyl-D-alanyl-D-alanine + UMP</text>
        <dbReference type="Rhea" id="RHEA:28386"/>
        <dbReference type="ChEBI" id="CHEBI:57865"/>
        <dbReference type="ChEBI" id="CHEBI:60392"/>
        <dbReference type="ChEBI" id="CHEBI:61386"/>
        <dbReference type="ChEBI" id="CHEBI:61387"/>
        <dbReference type="EC" id="2.7.8.13"/>
    </reaction>
</comment>
<comment type="cofactor">
    <cofactor evidence="1">
        <name>Mg(2+)</name>
        <dbReference type="ChEBI" id="CHEBI:18420"/>
    </cofactor>
</comment>
<comment type="pathway">
    <text evidence="1">Cell wall biogenesis; peptidoglycan biosynthesis.</text>
</comment>
<comment type="subcellular location">
    <subcellularLocation>
        <location evidence="1">Cell inner membrane</location>
        <topology evidence="1">Multi-pass membrane protein</topology>
    </subcellularLocation>
</comment>
<comment type="similarity">
    <text evidence="1">Belongs to the glycosyltransferase 4 family. MraY subfamily.</text>
</comment>
<protein>
    <recommendedName>
        <fullName evidence="1">Phospho-N-acetylmuramoyl-pentapeptide-transferase</fullName>
        <ecNumber evidence="1">2.7.8.13</ecNumber>
    </recommendedName>
    <alternativeName>
        <fullName evidence="1">UDP-MurNAc-pentapeptide phosphotransferase</fullName>
    </alternativeName>
</protein>
<accession>Q87SG7</accession>
<reference key="1">
    <citation type="journal article" date="2003" name="Lancet">
        <title>Genome sequence of Vibrio parahaemolyticus: a pathogenic mechanism distinct from that of V. cholerae.</title>
        <authorList>
            <person name="Makino K."/>
            <person name="Oshima K."/>
            <person name="Kurokawa K."/>
            <person name="Yokoyama K."/>
            <person name="Uda T."/>
            <person name="Tagomori K."/>
            <person name="Iijima Y."/>
            <person name="Najima M."/>
            <person name="Nakano M."/>
            <person name="Yamashita A."/>
            <person name="Kubota Y."/>
            <person name="Kimura S."/>
            <person name="Yasunaga T."/>
            <person name="Honda T."/>
            <person name="Shinagawa H."/>
            <person name="Hattori M."/>
            <person name="Iida T."/>
        </authorList>
    </citation>
    <scope>NUCLEOTIDE SEQUENCE [LARGE SCALE GENOMIC DNA]</scope>
    <source>
        <strain>RIMD 2210633</strain>
    </source>
</reference>